<keyword id="KW-0025">Alternative splicing</keyword>
<keyword id="KW-0112">Calmodulin-binding</keyword>
<keyword id="KW-0407">Ion channel</keyword>
<keyword id="KW-0406">Ion transport</keyword>
<keyword id="KW-0472">Membrane</keyword>
<keyword id="KW-1185">Reference proteome</keyword>
<keyword id="KW-0691">RNA editing</keyword>
<keyword id="KW-0812">Transmembrane</keyword>
<keyword id="KW-1133">Transmembrane helix</keyword>
<keyword id="KW-0813">Transport</keyword>
<proteinExistence type="evidence at transcript level"/>
<feature type="chain" id="PRO_0000282954" description="Small conductance calcium-activated potassium channel protein">
    <location>
        <begin position="1"/>
        <end position="927"/>
    </location>
</feature>
<feature type="transmembrane region" description="Helical; Name=Segment S1" evidence="3">
    <location>
        <begin position="489"/>
        <end position="509"/>
    </location>
</feature>
<feature type="transmembrane region" description="Helical; Name=Segment S2" evidence="3">
    <location>
        <begin position="530"/>
        <end position="550"/>
    </location>
</feature>
<feature type="transmembrane region" description="Helical; Name=Segment S3" evidence="3">
    <location>
        <begin position="569"/>
        <end position="589"/>
    </location>
</feature>
<feature type="transmembrane region" description="Helical; Name=Segment S4" evidence="3">
    <location>
        <begin position="609"/>
        <end position="629"/>
    </location>
</feature>
<feature type="transmembrane region" description="Helical; Name=Segment S5" evidence="3">
    <location>
        <begin position="658"/>
        <end position="678"/>
    </location>
</feature>
<feature type="intramembrane region" description="Pore-forming; Name=Segment H5" evidence="3">
    <location>
        <begin position="696"/>
        <end position="716"/>
    </location>
</feature>
<feature type="transmembrane region" description="Helical; Name=Segment S6" evidence="3">
    <location>
        <begin position="724"/>
        <end position="744"/>
    </location>
</feature>
<feature type="region of interest" description="Disordered" evidence="4">
    <location>
        <begin position="1"/>
        <end position="131"/>
    </location>
</feature>
<feature type="region of interest" description="Disordered" evidence="4">
    <location>
        <begin position="181"/>
        <end position="251"/>
    </location>
</feature>
<feature type="region of interest" description="Disordered" evidence="4">
    <location>
        <begin position="296"/>
        <end position="336"/>
    </location>
</feature>
<feature type="region of interest" description="Calmodulin-binding" evidence="1">
    <location>
        <begin position="763"/>
        <end position="839"/>
    </location>
</feature>
<feature type="compositionally biased region" description="Polar residues" evidence="4">
    <location>
        <begin position="1"/>
        <end position="31"/>
    </location>
</feature>
<feature type="compositionally biased region" description="Low complexity" evidence="4">
    <location>
        <begin position="45"/>
        <end position="62"/>
    </location>
</feature>
<feature type="compositionally biased region" description="Gly residues" evidence="4">
    <location>
        <begin position="63"/>
        <end position="77"/>
    </location>
</feature>
<feature type="compositionally biased region" description="Polar residues" evidence="4">
    <location>
        <begin position="95"/>
        <end position="107"/>
    </location>
</feature>
<feature type="compositionally biased region" description="Polar residues" evidence="4">
    <location>
        <begin position="200"/>
        <end position="214"/>
    </location>
</feature>
<feature type="compositionally biased region" description="Low complexity" evidence="4">
    <location>
        <begin position="219"/>
        <end position="232"/>
    </location>
</feature>
<feature type="compositionally biased region" description="Low complexity" evidence="4">
    <location>
        <begin position="296"/>
        <end position="308"/>
    </location>
</feature>
<feature type="compositionally biased region" description="Polar residues" evidence="4">
    <location>
        <begin position="314"/>
        <end position="336"/>
    </location>
</feature>
<feature type="splice variant" id="VSP_052358" description="In isoform H, isoform I and isoform L." evidence="8 9">
    <location>
        <begin position="1"/>
        <end position="405"/>
    </location>
</feature>
<feature type="splice variant" id="VSP_038238" description="In isoform N." evidence="10">
    <original>SIQKLNDTTNSGYVSSEETDSLLVSSSNPSKGGGRTALLRQVKSNSTNGPTTGASTSSSGSVSGGGGGSGSGGGSASGSAAGASKPTLMRQDRTSTYLTSPQQSQHARMGSEESMRGGASGAAGHDEDVEQGLVRSSIVPDIEVHEEDQ</original>
    <variation>SPAFCMDNDCNQSALYQKCHATPPPPPMPPMPVIPPLPPMPVIPPIPPLPPMVVSTSSTPSATPSMTPSPTPSRSPSLTVMMTSPQALQSLQPQVPQTQMSQPVNTAAALMTRTGSVGGATSAARRNSLWLETLRSTRKLSYANERPIL</variation>
    <location>
        <begin position="2"/>
        <end position="150"/>
    </location>
</feature>
<feature type="splice variant" id="VSP_038239" description="In isoform N." evidence="10">
    <location>
        <begin position="151"/>
        <end position="392"/>
    </location>
</feature>
<feature type="splice variant" id="VSP_052362" description="In isoform H." evidence="9">
    <original>Q</original>
    <variation>QVR</variation>
    <location>
        <position position="546"/>
    </location>
</feature>
<feature type="splice variant" id="VSP_052363" description="In isoform H and isoform M." evidence="9">
    <original>SMWLTAITFLCVGYGDIVPNTYCGRGITLTCGMV</original>
    <variation>AMWLIAITFLSVGFGDIVPNTYCGRGIAVSTGIM</variation>
    <location>
        <begin position="699"/>
        <end position="732"/>
    </location>
</feature>
<feature type="splice variant" id="VSP_052364" description="In isoform J." evidence="8">
    <location>
        <begin position="813"/>
        <end position="927"/>
    </location>
</feature>
<feature type="splice variant" id="VSP_052365" description="In isoform L." evidence="10">
    <original>S</original>
    <variation>SRSVPSSNNAAATYHWPTSPILPPISSRTPHLVPDTHMPSNGSAVNSYASSNKYG</variation>
    <location>
        <position position="926"/>
    </location>
</feature>
<feature type="sequence variant" description="In RNA edited version.">
    <original>Y</original>
    <variation>C</variation>
    <location>
        <position position="785"/>
    </location>
</feature>
<feature type="sequence conflict" description="In Ref. 3; AAM50111." evidence="10" ref="3">
    <original>T</original>
    <variation>A</variation>
    <location>
        <position position="781"/>
    </location>
</feature>
<name>KCNN_DROME</name>
<comment type="function">
    <text evidence="2">Forms a voltage-independent potassium channel activated by intracellular calcium. Activation is followed by membrane hyperpolarization. Thought to regulate neuronal excitability by contributing to the slow component of synaptic afterhyperpolarization. The channel is blocked by apamin (By similarity).</text>
</comment>
<comment type="subunit">
    <text evidence="1">Heterooligomer. The complex is composed of 4 channel subunits each of which binds to a calmodulin subunit which regulates the channel activity through calcium-binding (By similarity).</text>
</comment>
<comment type="subcellular location">
    <subcellularLocation>
        <location evidence="3">Membrane</location>
        <topology evidence="3">Multi-pass membrane protein</topology>
    </subcellularLocation>
</comment>
<comment type="alternative products">
    <event type="alternative splicing"/>
    <isoform>
        <id>Q7KVW5-1</id>
        <name>K</name>
        <sequence type="displayed"/>
    </isoform>
    <isoform>
        <id>Q7KVW5-2</id>
        <name>J</name>
        <sequence type="described" ref="VSP_052364"/>
    </isoform>
    <isoform>
        <id>Q7KVW5-4</id>
        <name>L</name>
        <sequence type="described" ref="VSP_052358 VSP_052365"/>
    </isoform>
    <isoform>
        <id>Q7KVW5-5</id>
        <name>M</name>
        <sequence type="described" ref="VSP_052363"/>
    </isoform>
    <isoform>
        <id>Q7KVW5-6</id>
        <name>N</name>
        <sequence type="described" ref="VSP_038238 VSP_038239"/>
    </isoform>
    <isoform>
        <id>Q7KVW5-7</id>
        <name>I</name>
        <sequence type="described" ref="VSP_052358"/>
    </isoform>
    <isoform>
        <id>Q7KVW5-8</id>
        <name>H</name>
        <sequence type="described" ref="VSP_052358 VSP_052362 VSP_052363"/>
    </isoform>
</comment>
<comment type="RNA editing">
    <location>
        <position position="782" evidence="6"/>
    </location>
    <text evidence="7">Partially edited. Target of Adar.</text>
</comment>
<comment type="similarity">
    <text evidence="10">Belongs to the potassium channel KCNN family. SK subfamily.</text>
</comment>
<comment type="sequence caution" evidence="10">
    <conflict type="miscellaneous discrepancy">
        <sequence resource="EMBL-CDS" id="AAM50111"/>
    </conflict>
    <text>Intron retention.</text>
</comment>
<comment type="sequence caution" evidence="10">
    <conflict type="frameshift">
        <sequence resource="EMBL-CDS" id="ABJ17041"/>
    </conflict>
</comment>
<evidence type="ECO:0000250" key="1"/>
<evidence type="ECO:0000250" key="2">
    <source>
        <dbReference type="UniProtKB" id="P70604"/>
    </source>
</evidence>
<evidence type="ECO:0000255" key="3"/>
<evidence type="ECO:0000256" key="4">
    <source>
        <dbReference type="SAM" id="MobiDB-lite"/>
    </source>
</evidence>
<evidence type="ECO:0000269" key="5">
    <source>
    </source>
</evidence>
<evidence type="ECO:0000269" key="6">
    <source>
    </source>
</evidence>
<evidence type="ECO:0000269" key="7">
    <source>
    </source>
</evidence>
<evidence type="ECO:0000303" key="8">
    <source>
    </source>
</evidence>
<evidence type="ECO:0000303" key="9">
    <source ref="4"/>
</evidence>
<evidence type="ECO:0000305" key="10"/>
<evidence type="ECO:0000312" key="11">
    <source>
        <dbReference type="EMBL" id="AAM50183.1"/>
    </source>
</evidence>
<evidence type="ECO:0000312" key="12">
    <source>
        <dbReference type="EMBL" id="ABJ17041.1"/>
    </source>
</evidence>
<evidence type="ECO:0000312" key="13">
    <source>
        <dbReference type="FlyBase" id="FBgn0029761"/>
    </source>
</evidence>
<organism>
    <name type="scientific">Drosophila melanogaster</name>
    <name type="common">Fruit fly</name>
    <dbReference type="NCBI Taxonomy" id="7227"/>
    <lineage>
        <taxon>Eukaryota</taxon>
        <taxon>Metazoa</taxon>
        <taxon>Ecdysozoa</taxon>
        <taxon>Arthropoda</taxon>
        <taxon>Hexapoda</taxon>
        <taxon>Insecta</taxon>
        <taxon>Pterygota</taxon>
        <taxon>Neoptera</taxon>
        <taxon>Endopterygota</taxon>
        <taxon>Diptera</taxon>
        <taxon>Brachycera</taxon>
        <taxon>Muscomorpha</taxon>
        <taxon>Ephydroidea</taxon>
        <taxon>Drosophilidae</taxon>
        <taxon>Drosophila</taxon>
        <taxon>Sophophora</taxon>
    </lineage>
</organism>
<accession>Q7KVW5</accession>
<accession>A4V3Z5</accession>
<accession>A8WHR7</accession>
<accession>Q058W0</accession>
<accession>Q7KVW6</accession>
<accession>Q8IRR8</accession>
<accession>Q8IS28</accession>
<accession>Q8IS29</accession>
<accession>Q8MRM1</accession>
<accession>Q8MRR6</accession>
<accession>Q9W4C6</accession>
<accession>Q9W4C7</accession>
<sequence>MSIQKLNDTTNSGYVSSEETDSLLVSSSNPSKGGGRTALLRQVKSNSTNGPTTGASTSSSGSVSGGGGGSGSGGGSASGSAAGASKPTLMRQDRTSTYLTSPQQSQHARMGSEESMRGGASGAAGHDEDVEQGLVRSSIVPDIEVHEEDQEQHSQQLNATTMATMTNNQQQQQPTISIMNLSLKPGDSHSHSSSPGSHPNLGTSSYQNLASSIPPSVPSRCRACRNCSRRASTTPTTLIDRSASRDSVKSAFQQGNLSGSMAICISNSALPQQQQLQQQYHLQQQQQQHYQLQQHHLHQQQLQQSQQQVPPVLITSSPTNGSRIIRQSSQPESSSTAICCGPHSACVGHAHSHSHTVPNVSLKQLRESSGDGIAGIAADSLRINGGMRPFKQLRKPASTLSIPGSMKTPSIANREQISSGCNEEAAEALVGIHSDYPRYEMYMEERALTGGNTSRKPSTNSAKHKPNVGYRLGKRKALFEKRKRISDYALVMGMFGIIVMVIENELSSAGVYTKASFYSTALKTLISVSTVILLGLIVAYHALEVQLFMIDNCADDWRIAMTWQRISQIGLELFICAIHPIPGEYYFQWTTKLANKNKTIGTEMVPYDVALSLPMFLRLYLICRVMLLHSKLFTDASSRSIGALNRINFNTRFVLKTLMTICPGTVLLVFMVSLWIIASWTLRQCERFHDEEHANLLNSMWLTAITFLCVGYGDIVPNTYCGRGITLTCGMVGAGCTALLVAVVSRKLELTRAEKHVHNFMMDTQLTKRLKNAAANVLRETWLIYKHTRLVKRVNPGRVRTHQRKFLLAIYALRKVKMDQRKLMDNANTITDMAKTQNTVYEIISDMSSRQDAIEERLTNLEDKMQSIQEHMESLPDLLSRCLTQHQERIEQRRNFLHPDTAAVAPIQAPTPQSMFNAAPMLFPHSS</sequence>
<gene>
    <name evidence="13" type="primary">SK</name>
    <name type="ORF">CG10706</name>
</gene>
<dbReference type="EMBL" id="AE014298">
    <property type="protein sequence ID" value="AAF46029.4"/>
    <property type="molecule type" value="Genomic_DNA"/>
</dbReference>
<dbReference type="EMBL" id="AE014298">
    <property type="protein sequence ID" value="AAF46030.3"/>
    <property type="molecule type" value="Genomic_DNA"/>
</dbReference>
<dbReference type="EMBL" id="AE014298">
    <property type="protein sequence ID" value="AAN09136.3"/>
    <property type="molecule type" value="Genomic_DNA"/>
</dbReference>
<dbReference type="EMBL" id="AE014298">
    <property type="protein sequence ID" value="AAN09137.2"/>
    <property type="molecule type" value="Genomic_DNA"/>
</dbReference>
<dbReference type="EMBL" id="AE014298">
    <property type="protein sequence ID" value="AAS65264.2"/>
    <property type="molecule type" value="Genomic_DNA"/>
</dbReference>
<dbReference type="EMBL" id="AE014298">
    <property type="protein sequence ID" value="AAF46027.4"/>
    <property type="molecule type" value="Genomic_DNA"/>
</dbReference>
<dbReference type="EMBL" id="AE014298">
    <property type="protein sequence ID" value="ABX11900.2"/>
    <property type="molecule type" value="Genomic_DNA"/>
</dbReference>
<dbReference type="EMBL" id="AY119457">
    <property type="protein sequence ID" value="AAM50111.1"/>
    <property type="status" value="ALT_SEQ"/>
    <property type="molecule type" value="mRNA"/>
</dbReference>
<dbReference type="EMBL" id="AY119529">
    <property type="protein sequence ID" value="AAM50183.1"/>
    <property type="molecule type" value="mRNA"/>
</dbReference>
<dbReference type="EMBL" id="BT029108">
    <property type="protein sequence ID" value="ABJ17041.1"/>
    <property type="status" value="ALT_FRAME"/>
    <property type="molecule type" value="mRNA"/>
</dbReference>
<dbReference type="EMBL" id="AY157147">
    <property type="protein sequence ID" value="AAN71717.1"/>
    <property type="molecule type" value="mRNA"/>
</dbReference>
<dbReference type="EMBL" id="AY157148">
    <property type="protein sequence ID" value="AAN71718.1"/>
    <property type="molecule type" value="mRNA"/>
</dbReference>
<dbReference type="RefSeq" id="NP_001096885.2">
    <molecule id="Q7KVW5-6"/>
    <property type="nucleotide sequence ID" value="NM_001103415.2"/>
</dbReference>
<dbReference type="RefSeq" id="NP_525078.3">
    <molecule id="Q7KVW5-4"/>
    <property type="nucleotide sequence ID" value="NM_080339.3"/>
</dbReference>
<dbReference type="RefSeq" id="NP_726986.3">
    <molecule id="Q7KVW5-1"/>
    <property type="nucleotide sequence ID" value="NM_167029.3"/>
</dbReference>
<dbReference type="RefSeq" id="NP_726987.2">
    <molecule id="Q7KVW5-7"/>
    <property type="nucleotide sequence ID" value="NM_167030.2"/>
</dbReference>
<dbReference type="RefSeq" id="NP_726988.3">
    <molecule id="Q7KVW5-2"/>
    <property type="nucleotide sequence ID" value="NM_167031.3"/>
</dbReference>
<dbReference type="RefSeq" id="NP_726989.3">
    <molecule id="Q7KVW5-8"/>
    <property type="nucleotide sequence ID" value="NM_167032.2"/>
</dbReference>
<dbReference type="RefSeq" id="NP_996354.2">
    <molecule id="Q7KVW5-5"/>
    <property type="nucleotide sequence ID" value="NM_206631.4"/>
</dbReference>
<dbReference type="SMR" id="Q7KVW5"/>
<dbReference type="FunCoup" id="Q7KVW5">
    <property type="interactions" value="126"/>
</dbReference>
<dbReference type="IntAct" id="Q7KVW5">
    <property type="interactions" value="1"/>
</dbReference>
<dbReference type="STRING" id="7227.FBpp0310909"/>
<dbReference type="TCDB" id="1.A.1.16.3">
    <property type="family name" value="the voltage-gated ion channel (vic) superfamily"/>
</dbReference>
<dbReference type="GlyGen" id="Q7KVW5">
    <property type="glycosylation" value="1 site"/>
</dbReference>
<dbReference type="PaxDb" id="7227-FBpp0303993"/>
<dbReference type="EnsemblMetazoa" id="FBtr0300467">
    <molecule id="Q7KVW5-8"/>
    <property type="protein sequence ID" value="FBpp0289694"/>
    <property type="gene ID" value="FBgn0029761"/>
</dbReference>
<dbReference type="EnsemblMetazoa" id="FBtr0301949">
    <molecule id="Q7KVW5-7"/>
    <property type="protein sequence ID" value="FBpp0291161"/>
    <property type="gene ID" value="FBgn0029761"/>
</dbReference>
<dbReference type="EnsemblMetazoa" id="FBtr0301950">
    <molecule id="Q7KVW5-2"/>
    <property type="protein sequence ID" value="FBpp0291162"/>
    <property type="gene ID" value="FBgn0029761"/>
</dbReference>
<dbReference type="EnsemblMetazoa" id="FBtr0301951">
    <molecule id="Q7KVW5-1"/>
    <property type="protein sequence ID" value="FBpp0291163"/>
    <property type="gene ID" value="FBgn0029761"/>
</dbReference>
<dbReference type="EnsemblMetazoa" id="FBtr0301952">
    <molecule id="Q7KVW5-4"/>
    <property type="protein sequence ID" value="FBpp0291164"/>
    <property type="gene ID" value="FBgn0029761"/>
</dbReference>
<dbReference type="EnsemblMetazoa" id="FBtr0301953">
    <molecule id="Q7KVW5-5"/>
    <property type="protein sequence ID" value="FBpp0291165"/>
    <property type="gene ID" value="FBgn0029761"/>
</dbReference>
<dbReference type="EnsemblMetazoa" id="FBtr0301954">
    <molecule id="Q7KVW5-6"/>
    <property type="protein sequence ID" value="FBpp0291166"/>
    <property type="gene ID" value="FBgn0029761"/>
</dbReference>
<dbReference type="GeneID" id="31456"/>
<dbReference type="KEGG" id="dme:Dmel_CG10706"/>
<dbReference type="UCSC" id="CG10706-RG">
    <property type="organism name" value="d. melanogaster"/>
</dbReference>
<dbReference type="AGR" id="FB:FBgn0029761"/>
<dbReference type="CTD" id="31456"/>
<dbReference type="FlyBase" id="FBgn0029761">
    <property type="gene designation" value="SK"/>
</dbReference>
<dbReference type="VEuPathDB" id="VectorBase:FBgn0029761"/>
<dbReference type="eggNOG" id="KOG3684">
    <property type="taxonomic scope" value="Eukaryota"/>
</dbReference>
<dbReference type="GeneTree" id="ENSGT00950000182904"/>
<dbReference type="HOGENOM" id="CLU_011943_0_0_1"/>
<dbReference type="InParanoid" id="Q7KVW5"/>
<dbReference type="OMA" id="PPCQWPP"/>
<dbReference type="OrthoDB" id="73653at2759"/>
<dbReference type="Reactome" id="R-DME-1296052">
    <property type="pathway name" value="Ca2+ activated K+ channels"/>
</dbReference>
<dbReference type="BioGRID-ORCS" id="31456">
    <property type="hits" value="0 hits in 3 CRISPR screens"/>
</dbReference>
<dbReference type="GenomeRNAi" id="31456"/>
<dbReference type="PRO" id="PR:Q7KVW5"/>
<dbReference type="Proteomes" id="UP000000803">
    <property type="component" value="Chromosome X"/>
</dbReference>
<dbReference type="Bgee" id="FBgn0029761">
    <property type="expression patterns" value="Expressed in adult olfactory receptor neuron Gr21a/63a (Drosophila) in antenna and 227 other cell types or tissues"/>
</dbReference>
<dbReference type="ExpressionAtlas" id="Q7KVW5">
    <property type="expression patterns" value="baseline and differential"/>
</dbReference>
<dbReference type="GO" id="GO:0016020">
    <property type="term" value="C:membrane"/>
    <property type="evidence" value="ECO:0000314"/>
    <property type="project" value="FlyBase"/>
</dbReference>
<dbReference type="GO" id="GO:0043005">
    <property type="term" value="C:neuron projection"/>
    <property type="evidence" value="ECO:0000318"/>
    <property type="project" value="GO_Central"/>
</dbReference>
<dbReference type="GO" id="GO:0043025">
    <property type="term" value="C:neuronal cell body"/>
    <property type="evidence" value="ECO:0000318"/>
    <property type="project" value="GO_Central"/>
</dbReference>
<dbReference type="GO" id="GO:0005886">
    <property type="term" value="C:plasma membrane"/>
    <property type="evidence" value="ECO:0000318"/>
    <property type="project" value="GO_Central"/>
</dbReference>
<dbReference type="GO" id="GO:0005516">
    <property type="term" value="F:calmodulin binding"/>
    <property type="evidence" value="ECO:0000318"/>
    <property type="project" value="GO_Central"/>
</dbReference>
<dbReference type="GO" id="GO:0009881">
    <property type="term" value="F:photoreceptor activity"/>
    <property type="evidence" value="ECO:0000314"/>
    <property type="project" value="FlyBase"/>
</dbReference>
<dbReference type="GO" id="GO:0016286">
    <property type="term" value="F:small conductance calcium-activated potassium channel activity"/>
    <property type="evidence" value="ECO:0000314"/>
    <property type="project" value="FlyBase"/>
</dbReference>
<dbReference type="GO" id="GO:0071805">
    <property type="term" value="P:potassium ion transmembrane transport"/>
    <property type="evidence" value="ECO:0000318"/>
    <property type="project" value="GO_Central"/>
</dbReference>
<dbReference type="GO" id="GO:0006813">
    <property type="term" value="P:potassium ion transport"/>
    <property type="evidence" value="ECO:0000315"/>
    <property type="project" value="FlyBase"/>
</dbReference>
<dbReference type="GO" id="GO:0016057">
    <property type="term" value="P:regulation of membrane potential in photoreceptor cell"/>
    <property type="evidence" value="ECO:0000314"/>
    <property type="project" value="FlyBase"/>
</dbReference>
<dbReference type="FunFam" id="1.10.287.70:FF:000022">
    <property type="entry name" value="Small conductance calcium-activated potassium channel, isoform O"/>
    <property type="match status" value="1"/>
</dbReference>
<dbReference type="FunFam" id="1.10.287.70:FF:000027">
    <property type="entry name" value="Small conductance calcium-activated potassium channel, isoform O"/>
    <property type="match status" value="1"/>
</dbReference>
<dbReference type="Gene3D" id="1.10.287.70">
    <property type="match status" value="2"/>
</dbReference>
<dbReference type="InterPro" id="IPR004178">
    <property type="entry name" value="CaM-bd_dom"/>
</dbReference>
<dbReference type="InterPro" id="IPR036122">
    <property type="entry name" value="CaM-bd_dom_sf"/>
</dbReference>
<dbReference type="InterPro" id="IPR015449">
    <property type="entry name" value="K_chnl_Ca-activ_SK"/>
</dbReference>
<dbReference type="InterPro" id="IPR013099">
    <property type="entry name" value="K_chnl_dom"/>
</dbReference>
<dbReference type="PANTHER" id="PTHR10153">
    <property type="entry name" value="SMALL CONDUCTANCE CALCIUM-ACTIVATED POTASSIUM CHANNEL"/>
    <property type="match status" value="1"/>
</dbReference>
<dbReference type="Pfam" id="PF02888">
    <property type="entry name" value="CaMBD"/>
    <property type="match status" value="1"/>
</dbReference>
<dbReference type="Pfam" id="PF07885">
    <property type="entry name" value="Ion_trans_2"/>
    <property type="match status" value="1"/>
</dbReference>
<dbReference type="Pfam" id="PF03530">
    <property type="entry name" value="SK_channel"/>
    <property type="match status" value="1"/>
</dbReference>
<dbReference type="PRINTS" id="PR01451">
    <property type="entry name" value="SKCHANNEL"/>
</dbReference>
<dbReference type="SMART" id="SM01053">
    <property type="entry name" value="CaMBD"/>
    <property type="match status" value="1"/>
</dbReference>
<dbReference type="SUPFAM" id="SSF81327">
    <property type="entry name" value="Small-conductance potassium channel"/>
    <property type="match status" value="1"/>
</dbReference>
<dbReference type="SUPFAM" id="SSF81324">
    <property type="entry name" value="Voltage-gated potassium channels"/>
    <property type="match status" value="1"/>
</dbReference>
<protein>
    <recommendedName>
        <fullName>Small conductance calcium-activated potassium channel protein</fullName>
    </recommendedName>
    <alternativeName>
        <fullName>Protein SK</fullName>
    </alternativeName>
    <alternativeName>
        <fullName>dSK</fullName>
    </alternativeName>
</protein>
<reference key="1">
    <citation type="journal article" date="2000" name="Science">
        <title>The genome sequence of Drosophila melanogaster.</title>
        <authorList>
            <person name="Adams M.D."/>
            <person name="Celniker S.E."/>
            <person name="Holt R.A."/>
            <person name="Evans C.A."/>
            <person name="Gocayne J.D."/>
            <person name="Amanatides P.G."/>
            <person name="Scherer S.E."/>
            <person name="Li P.W."/>
            <person name="Hoskins R.A."/>
            <person name="Galle R.F."/>
            <person name="George R.A."/>
            <person name="Lewis S.E."/>
            <person name="Richards S."/>
            <person name="Ashburner M."/>
            <person name="Henderson S.N."/>
            <person name="Sutton G.G."/>
            <person name="Wortman J.R."/>
            <person name="Yandell M.D."/>
            <person name="Zhang Q."/>
            <person name="Chen L.X."/>
            <person name="Brandon R.C."/>
            <person name="Rogers Y.-H.C."/>
            <person name="Blazej R.G."/>
            <person name="Champe M."/>
            <person name="Pfeiffer B.D."/>
            <person name="Wan K.H."/>
            <person name="Doyle C."/>
            <person name="Baxter E.G."/>
            <person name="Helt G."/>
            <person name="Nelson C.R."/>
            <person name="Miklos G.L.G."/>
            <person name="Abril J.F."/>
            <person name="Agbayani A."/>
            <person name="An H.-J."/>
            <person name="Andrews-Pfannkoch C."/>
            <person name="Baldwin D."/>
            <person name="Ballew R.M."/>
            <person name="Basu A."/>
            <person name="Baxendale J."/>
            <person name="Bayraktaroglu L."/>
            <person name="Beasley E.M."/>
            <person name="Beeson K.Y."/>
            <person name="Benos P.V."/>
            <person name="Berman B.P."/>
            <person name="Bhandari D."/>
            <person name="Bolshakov S."/>
            <person name="Borkova D."/>
            <person name="Botchan M.R."/>
            <person name="Bouck J."/>
            <person name="Brokstein P."/>
            <person name="Brottier P."/>
            <person name="Burtis K.C."/>
            <person name="Busam D.A."/>
            <person name="Butler H."/>
            <person name="Cadieu E."/>
            <person name="Center A."/>
            <person name="Chandra I."/>
            <person name="Cherry J.M."/>
            <person name="Cawley S."/>
            <person name="Dahlke C."/>
            <person name="Davenport L.B."/>
            <person name="Davies P."/>
            <person name="de Pablos B."/>
            <person name="Delcher A."/>
            <person name="Deng Z."/>
            <person name="Mays A.D."/>
            <person name="Dew I."/>
            <person name="Dietz S.M."/>
            <person name="Dodson K."/>
            <person name="Doup L.E."/>
            <person name="Downes M."/>
            <person name="Dugan-Rocha S."/>
            <person name="Dunkov B.C."/>
            <person name="Dunn P."/>
            <person name="Durbin K.J."/>
            <person name="Evangelista C.C."/>
            <person name="Ferraz C."/>
            <person name="Ferriera S."/>
            <person name="Fleischmann W."/>
            <person name="Fosler C."/>
            <person name="Gabrielian A.E."/>
            <person name="Garg N.S."/>
            <person name="Gelbart W.M."/>
            <person name="Glasser K."/>
            <person name="Glodek A."/>
            <person name="Gong F."/>
            <person name="Gorrell J.H."/>
            <person name="Gu Z."/>
            <person name="Guan P."/>
            <person name="Harris M."/>
            <person name="Harris N.L."/>
            <person name="Harvey D.A."/>
            <person name="Heiman T.J."/>
            <person name="Hernandez J.R."/>
            <person name="Houck J."/>
            <person name="Hostin D."/>
            <person name="Houston K.A."/>
            <person name="Howland T.J."/>
            <person name="Wei M.-H."/>
            <person name="Ibegwam C."/>
            <person name="Jalali M."/>
            <person name="Kalush F."/>
            <person name="Karpen G.H."/>
            <person name="Ke Z."/>
            <person name="Kennison J.A."/>
            <person name="Ketchum K.A."/>
            <person name="Kimmel B.E."/>
            <person name="Kodira C.D."/>
            <person name="Kraft C.L."/>
            <person name="Kravitz S."/>
            <person name="Kulp D."/>
            <person name="Lai Z."/>
            <person name="Lasko P."/>
            <person name="Lei Y."/>
            <person name="Levitsky A.A."/>
            <person name="Li J.H."/>
            <person name="Li Z."/>
            <person name="Liang Y."/>
            <person name="Lin X."/>
            <person name="Liu X."/>
            <person name="Mattei B."/>
            <person name="McIntosh T.C."/>
            <person name="McLeod M.P."/>
            <person name="McPherson D."/>
            <person name="Merkulov G."/>
            <person name="Milshina N.V."/>
            <person name="Mobarry C."/>
            <person name="Morris J."/>
            <person name="Moshrefi A."/>
            <person name="Mount S.M."/>
            <person name="Moy M."/>
            <person name="Murphy B."/>
            <person name="Murphy L."/>
            <person name="Muzny D.M."/>
            <person name="Nelson D.L."/>
            <person name="Nelson D.R."/>
            <person name="Nelson K.A."/>
            <person name="Nixon K."/>
            <person name="Nusskern D.R."/>
            <person name="Pacleb J.M."/>
            <person name="Palazzolo M."/>
            <person name="Pittman G.S."/>
            <person name="Pan S."/>
            <person name="Pollard J."/>
            <person name="Puri V."/>
            <person name="Reese M.G."/>
            <person name="Reinert K."/>
            <person name="Remington K."/>
            <person name="Saunders R.D.C."/>
            <person name="Scheeler F."/>
            <person name="Shen H."/>
            <person name="Shue B.C."/>
            <person name="Siden-Kiamos I."/>
            <person name="Simpson M."/>
            <person name="Skupski M.P."/>
            <person name="Smith T.J."/>
            <person name="Spier E."/>
            <person name="Spradling A.C."/>
            <person name="Stapleton M."/>
            <person name="Strong R."/>
            <person name="Sun E."/>
            <person name="Svirskas R."/>
            <person name="Tector C."/>
            <person name="Turner R."/>
            <person name="Venter E."/>
            <person name="Wang A.H."/>
            <person name="Wang X."/>
            <person name="Wang Z.-Y."/>
            <person name="Wassarman D.A."/>
            <person name="Weinstock G.M."/>
            <person name="Weissenbach J."/>
            <person name="Williams S.M."/>
            <person name="Woodage T."/>
            <person name="Worley K.C."/>
            <person name="Wu D."/>
            <person name="Yang S."/>
            <person name="Yao Q.A."/>
            <person name="Ye J."/>
            <person name="Yeh R.-F."/>
            <person name="Zaveri J.S."/>
            <person name="Zhan M."/>
            <person name="Zhang G."/>
            <person name="Zhao Q."/>
            <person name="Zheng L."/>
            <person name="Zheng X.H."/>
            <person name="Zhong F.N."/>
            <person name="Zhong W."/>
            <person name="Zhou X."/>
            <person name="Zhu S.C."/>
            <person name="Zhu X."/>
            <person name="Smith H.O."/>
            <person name="Gibbs R.A."/>
            <person name="Myers E.W."/>
            <person name="Rubin G.M."/>
            <person name="Venter J.C."/>
        </authorList>
    </citation>
    <scope>NUCLEOTIDE SEQUENCE [LARGE SCALE GENOMIC DNA]</scope>
    <source>
        <strain evidence="5">Berkeley</strain>
    </source>
</reference>
<reference evidence="10" key="2">
    <citation type="journal article" date="2002" name="Genome Biol.">
        <title>Annotation of the Drosophila melanogaster euchromatic genome: a systematic review.</title>
        <authorList>
            <person name="Misra S."/>
            <person name="Crosby M.A."/>
            <person name="Mungall C.J."/>
            <person name="Matthews B.B."/>
            <person name="Campbell K.S."/>
            <person name="Hradecky P."/>
            <person name="Huang Y."/>
            <person name="Kaminker J.S."/>
            <person name="Millburn G.H."/>
            <person name="Prochnik S.E."/>
            <person name="Smith C.D."/>
            <person name="Tupy J.L."/>
            <person name="Whitfield E.J."/>
            <person name="Bayraktaroglu L."/>
            <person name="Berman B.P."/>
            <person name="Bettencourt B.R."/>
            <person name="Celniker S.E."/>
            <person name="de Grey A.D.N.J."/>
            <person name="Drysdale R.A."/>
            <person name="Harris N.L."/>
            <person name="Richter J."/>
            <person name="Russo S."/>
            <person name="Schroeder A.J."/>
            <person name="Shu S.Q."/>
            <person name="Stapleton M."/>
            <person name="Yamada C."/>
            <person name="Ashburner M."/>
            <person name="Gelbart W.M."/>
            <person name="Rubin G.M."/>
            <person name="Lewis S.E."/>
        </authorList>
    </citation>
    <scope>GENOME REANNOTATION</scope>
    <scope>ALTERNATIVE SPLICING</scope>
    <source>
        <strain>Berkeley</strain>
    </source>
</reference>
<reference evidence="10 11" key="3">
    <citation type="journal article" date="2002" name="Genome Biol.">
        <title>A Drosophila full-length cDNA resource.</title>
        <authorList>
            <person name="Stapleton M."/>
            <person name="Carlson J.W."/>
            <person name="Brokstein P."/>
            <person name="Yu C."/>
            <person name="Champe M."/>
            <person name="George R.A."/>
            <person name="Guarin H."/>
            <person name="Kronmiller B."/>
            <person name="Pacleb J.M."/>
            <person name="Park S."/>
            <person name="Wan K.H."/>
            <person name="Rubin G.M."/>
            <person name="Celniker S.E."/>
        </authorList>
    </citation>
    <scope>NUCLEOTIDE SEQUENCE [LARGE SCALE MRNA] (ISOFORMS I AND J)</scope>
    <scope>RNA EDITING OF POSITION 782</scope>
    <source>
        <strain evidence="11">Berkeley</strain>
        <tissue evidence="6">Head</tissue>
    </source>
</reference>
<reference evidence="10 12" key="4">
    <citation type="submission" date="2006-10" db="EMBL/GenBank/DDBJ databases">
        <authorList>
            <person name="Stapleton M."/>
            <person name="Carlson J.W."/>
            <person name="Frise E."/>
            <person name="Kapadia B."/>
            <person name="Park S."/>
            <person name="Wan K.H."/>
            <person name="Yu C."/>
            <person name="Celniker S.E."/>
        </authorList>
    </citation>
    <scope>NUCLEOTIDE SEQUENCE [LARGE SCALE MRNA] (ISOFORM H)</scope>
    <source>
        <strain evidence="12">Berkeley</strain>
    </source>
</reference>
<reference evidence="10 12" key="5">
    <citation type="submission" date="2002-09" db="EMBL/GenBank/DDBJ databases">
        <title>Gene structure and developmental regulation of the small conductance calcium-activated potassium channel gene (dSK) in Drosophila.</title>
        <authorList>
            <person name="Nolazco G.M."/>
            <person name="Nguyen P."/>
            <person name="Theisen H."/>
            <person name="Ono J.K."/>
            <person name="McCaman R.E."/>
        </authorList>
    </citation>
    <scope>NUCLEOTIDE SEQUENCE [MRNA] OF 483-767 (ISOFORMS I/J/K/L AND M/H)</scope>
</reference>
<reference evidence="10" key="6">
    <citation type="journal article" date="2006" name="RNA">
        <title>RNA editing in Drosophila melanogaster: new targets and functional consequences.</title>
        <authorList>
            <person name="Stapleton M."/>
            <person name="Carlson J.W."/>
            <person name="Celniker S.E."/>
        </authorList>
    </citation>
    <scope>RNA EDITING OF POSITION 785</scope>
</reference>